<protein>
    <recommendedName>
        <fullName evidence="1">Diaminopimelate epimerase</fullName>
        <shortName evidence="1">DAP epimerase</shortName>
        <ecNumber evidence="1">5.1.1.7</ecNumber>
    </recommendedName>
    <alternativeName>
        <fullName evidence="1">PLP-independent amino acid racemase</fullName>
    </alternativeName>
</protein>
<name>DAPF_GLOC7</name>
<sequence length="281" mass="30849">MGIEFTKYHGLGNDFILIDNRHGSEPMVSPEMAVEMCDRHFGIGADGVIFVLPGTSQTDYQMRIFNSDGSEPEMCGNGIRCLAQFIAELEKTTEVGKSYRIDTLGGLMTPRLEAQEQVTVDMGLPRLLGSEIPTTLVSRTEKVIDQPIEVAGQSWLVTCVSMGNPHCITFVEDVKSIALETIGPQFEHHVAFPQRTNTEFIEVLRPDYLKMRVWERGAGITLACGTGACASVVAGVLTGKSDRRCTVELPGGCLSIYWSETDGHVYMTGPAKRVFTGVYEM</sequence>
<dbReference type="EC" id="5.1.1.7" evidence="1"/>
<dbReference type="EMBL" id="CP001291">
    <property type="protein sequence ID" value="ACK73493.1"/>
    <property type="molecule type" value="Genomic_DNA"/>
</dbReference>
<dbReference type="RefSeq" id="WP_015957073.1">
    <property type="nucleotide sequence ID" value="NC_011729.1"/>
</dbReference>
<dbReference type="SMR" id="B7KH06"/>
<dbReference type="STRING" id="65393.PCC7424_5143"/>
<dbReference type="KEGG" id="cyc:PCC7424_5143"/>
<dbReference type="eggNOG" id="COG0253">
    <property type="taxonomic scope" value="Bacteria"/>
</dbReference>
<dbReference type="HOGENOM" id="CLU_053306_2_1_3"/>
<dbReference type="OrthoDB" id="9805408at2"/>
<dbReference type="UniPathway" id="UPA00034">
    <property type="reaction ID" value="UER00025"/>
</dbReference>
<dbReference type="Proteomes" id="UP000002384">
    <property type="component" value="Chromosome"/>
</dbReference>
<dbReference type="GO" id="GO:0005829">
    <property type="term" value="C:cytosol"/>
    <property type="evidence" value="ECO:0007669"/>
    <property type="project" value="TreeGrafter"/>
</dbReference>
<dbReference type="GO" id="GO:0008837">
    <property type="term" value="F:diaminopimelate epimerase activity"/>
    <property type="evidence" value="ECO:0007669"/>
    <property type="project" value="UniProtKB-UniRule"/>
</dbReference>
<dbReference type="GO" id="GO:0009089">
    <property type="term" value="P:lysine biosynthetic process via diaminopimelate"/>
    <property type="evidence" value="ECO:0007669"/>
    <property type="project" value="UniProtKB-UniRule"/>
</dbReference>
<dbReference type="FunFam" id="3.10.310.10:FF:000009">
    <property type="entry name" value="Diaminopimelate epimerase chloroplastic"/>
    <property type="match status" value="1"/>
</dbReference>
<dbReference type="Gene3D" id="3.10.310.10">
    <property type="entry name" value="Diaminopimelate Epimerase, Chain A, domain 1"/>
    <property type="match status" value="2"/>
</dbReference>
<dbReference type="HAMAP" id="MF_00197">
    <property type="entry name" value="DAP_epimerase"/>
    <property type="match status" value="1"/>
</dbReference>
<dbReference type="InterPro" id="IPR018510">
    <property type="entry name" value="DAP_epimerase_AS"/>
</dbReference>
<dbReference type="InterPro" id="IPR001653">
    <property type="entry name" value="DAP_epimerase_DapF"/>
</dbReference>
<dbReference type="NCBIfam" id="TIGR00652">
    <property type="entry name" value="DapF"/>
    <property type="match status" value="1"/>
</dbReference>
<dbReference type="PANTHER" id="PTHR31689:SF0">
    <property type="entry name" value="DIAMINOPIMELATE EPIMERASE"/>
    <property type="match status" value="1"/>
</dbReference>
<dbReference type="PANTHER" id="PTHR31689">
    <property type="entry name" value="DIAMINOPIMELATE EPIMERASE, CHLOROPLASTIC"/>
    <property type="match status" value="1"/>
</dbReference>
<dbReference type="Pfam" id="PF01678">
    <property type="entry name" value="DAP_epimerase"/>
    <property type="match status" value="2"/>
</dbReference>
<dbReference type="SUPFAM" id="SSF54506">
    <property type="entry name" value="Diaminopimelate epimerase-like"/>
    <property type="match status" value="2"/>
</dbReference>
<dbReference type="PROSITE" id="PS01326">
    <property type="entry name" value="DAP_EPIMERASE"/>
    <property type="match status" value="1"/>
</dbReference>
<accession>B7KH06</accession>
<organism>
    <name type="scientific">Gloeothece citriformis (strain PCC 7424)</name>
    <name type="common">Cyanothece sp. (strain PCC 7424)</name>
    <dbReference type="NCBI Taxonomy" id="65393"/>
    <lineage>
        <taxon>Bacteria</taxon>
        <taxon>Bacillati</taxon>
        <taxon>Cyanobacteriota</taxon>
        <taxon>Cyanophyceae</taxon>
        <taxon>Oscillatoriophycideae</taxon>
        <taxon>Chroococcales</taxon>
        <taxon>Aphanothecaceae</taxon>
        <taxon>Gloeothece</taxon>
        <taxon>Gloeothece citriformis</taxon>
    </lineage>
</organism>
<feature type="chain" id="PRO_1000118665" description="Diaminopimelate epimerase">
    <location>
        <begin position="1"/>
        <end position="281"/>
    </location>
</feature>
<feature type="active site" description="Proton donor" evidence="1">
    <location>
        <position position="75"/>
    </location>
</feature>
<feature type="active site" description="Proton acceptor" evidence="1">
    <location>
        <position position="224"/>
    </location>
</feature>
<feature type="binding site" evidence="1">
    <location>
        <position position="13"/>
    </location>
    <ligand>
        <name>substrate</name>
    </ligand>
</feature>
<feature type="binding site" evidence="1">
    <location>
        <position position="66"/>
    </location>
    <ligand>
        <name>substrate</name>
    </ligand>
</feature>
<feature type="binding site" evidence="1">
    <location>
        <begin position="76"/>
        <end position="77"/>
    </location>
    <ligand>
        <name>substrate</name>
    </ligand>
</feature>
<feature type="binding site" evidence="1">
    <location>
        <position position="164"/>
    </location>
    <ligand>
        <name>substrate</name>
    </ligand>
</feature>
<feature type="binding site" evidence="1">
    <location>
        <position position="197"/>
    </location>
    <ligand>
        <name>substrate</name>
    </ligand>
</feature>
<feature type="binding site" evidence="1">
    <location>
        <begin position="215"/>
        <end position="216"/>
    </location>
    <ligand>
        <name>substrate</name>
    </ligand>
</feature>
<feature type="binding site" evidence="1">
    <location>
        <begin position="225"/>
        <end position="226"/>
    </location>
    <ligand>
        <name>substrate</name>
    </ligand>
</feature>
<feature type="site" description="Could be important to modulate the pK values of the two catalytic cysteine residues" evidence="1">
    <location>
        <position position="166"/>
    </location>
</feature>
<feature type="site" description="Could be important to modulate the pK values of the two catalytic cysteine residues" evidence="1">
    <location>
        <position position="215"/>
    </location>
</feature>
<reference key="1">
    <citation type="journal article" date="2011" name="MBio">
        <title>Novel metabolic attributes of the genus Cyanothece, comprising a group of unicellular nitrogen-fixing Cyanobacteria.</title>
        <authorList>
            <person name="Bandyopadhyay A."/>
            <person name="Elvitigala T."/>
            <person name="Welsh E."/>
            <person name="Stockel J."/>
            <person name="Liberton M."/>
            <person name="Min H."/>
            <person name="Sherman L.A."/>
            <person name="Pakrasi H.B."/>
        </authorList>
    </citation>
    <scope>NUCLEOTIDE SEQUENCE [LARGE SCALE GENOMIC DNA]</scope>
    <source>
        <strain>PCC 7424</strain>
    </source>
</reference>
<gene>
    <name evidence="1" type="primary">dapF</name>
    <name type="ordered locus">PCC7424_5143</name>
</gene>
<proteinExistence type="inferred from homology"/>
<evidence type="ECO:0000255" key="1">
    <source>
        <dbReference type="HAMAP-Rule" id="MF_00197"/>
    </source>
</evidence>
<comment type="function">
    <text evidence="1">Catalyzes the stereoinversion of LL-2,6-diaminopimelate (L,L-DAP) to meso-diaminopimelate (meso-DAP), a precursor of L-lysine and an essential component of the bacterial peptidoglycan.</text>
</comment>
<comment type="catalytic activity">
    <reaction evidence="1">
        <text>(2S,6S)-2,6-diaminopimelate = meso-2,6-diaminopimelate</text>
        <dbReference type="Rhea" id="RHEA:15393"/>
        <dbReference type="ChEBI" id="CHEBI:57609"/>
        <dbReference type="ChEBI" id="CHEBI:57791"/>
        <dbReference type="EC" id="5.1.1.7"/>
    </reaction>
</comment>
<comment type="pathway">
    <text evidence="1">Amino-acid biosynthesis; L-lysine biosynthesis via DAP pathway; DL-2,6-diaminopimelate from LL-2,6-diaminopimelate: step 1/1.</text>
</comment>
<comment type="subunit">
    <text evidence="1">Homodimer.</text>
</comment>
<comment type="subcellular location">
    <subcellularLocation>
        <location evidence="1">Cytoplasm</location>
    </subcellularLocation>
</comment>
<comment type="similarity">
    <text evidence="1">Belongs to the diaminopimelate epimerase family.</text>
</comment>
<keyword id="KW-0028">Amino-acid biosynthesis</keyword>
<keyword id="KW-0963">Cytoplasm</keyword>
<keyword id="KW-0413">Isomerase</keyword>
<keyword id="KW-0457">Lysine biosynthesis</keyword>
<keyword id="KW-1185">Reference proteome</keyword>